<organism>
    <name type="scientific">Thermococcus profundus</name>
    <dbReference type="NCBI Taxonomy" id="49899"/>
    <lineage>
        <taxon>Archaea</taxon>
        <taxon>Methanobacteriati</taxon>
        <taxon>Methanobacteriota</taxon>
        <taxon>Thermococci</taxon>
        <taxon>Thermococcales</taxon>
        <taxon>Thermococcaceae</taxon>
        <taxon>Thermococcus</taxon>
    </lineage>
</organism>
<feature type="chain" id="PRO_0000182763" description="Glutamate dehydrogenase">
    <location>
        <begin position="1"/>
        <end position="419"/>
    </location>
</feature>
<feature type="active site" evidence="3">
    <location>
        <position position="105"/>
    </location>
</feature>
<feature type="binding site" evidence="2">
    <location>
        <begin position="219"/>
        <end position="225"/>
    </location>
    <ligand>
        <name>NAD(+)</name>
        <dbReference type="ChEBI" id="CHEBI:57540"/>
    </ligand>
</feature>
<feature type="helix" evidence="5">
    <location>
        <begin position="5"/>
        <end position="17"/>
    </location>
</feature>
<feature type="helix" evidence="5">
    <location>
        <begin position="25"/>
        <end position="32"/>
    </location>
</feature>
<feature type="strand" evidence="5">
    <location>
        <begin position="35"/>
        <end position="45"/>
    </location>
</feature>
<feature type="strand" evidence="5">
    <location>
        <begin position="51"/>
        <end position="62"/>
    </location>
</feature>
<feature type="strand" evidence="5">
    <location>
        <begin position="66"/>
        <end position="74"/>
    </location>
</feature>
<feature type="helix" evidence="5">
    <location>
        <begin position="80"/>
        <end position="96"/>
    </location>
</feature>
<feature type="strand" evidence="5">
    <location>
        <begin position="102"/>
        <end position="110"/>
    </location>
</feature>
<feature type="helix" evidence="6">
    <location>
        <begin position="112"/>
        <end position="114"/>
    </location>
</feature>
<feature type="helix" evidence="5">
    <location>
        <begin position="117"/>
        <end position="131"/>
    </location>
</feature>
<feature type="helix" evidence="5">
    <location>
        <begin position="132"/>
        <end position="134"/>
    </location>
</feature>
<feature type="turn" evidence="5">
    <location>
        <begin position="137"/>
        <end position="139"/>
    </location>
</feature>
<feature type="strand" evidence="5">
    <location>
        <begin position="140"/>
        <end position="143"/>
    </location>
</feature>
<feature type="helix" evidence="5">
    <location>
        <begin position="150"/>
        <end position="164"/>
    </location>
</feature>
<feature type="helix" evidence="5">
    <location>
        <begin position="170"/>
        <end position="173"/>
    </location>
</feature>
<feature type="strand" evidence="7">
    <location>
        <begin position="174"/>
        <end position="176"/>
    </location>
</feature>
<feature type="helix" evidence="5">
    <location>
        <begin position="179"/>
        <end position="181"/>
    </location>
</feature>
<feature type="helix" evidence="5">
    <location>
        <begin position="190"/>
        <end position="206"/>
    </location>
</feature>
<feature type="strand" evidence="5">
    <location>
        <begin position="214"/>
        <end position="218"/>
    </location>
</feature>
<feature type="helix" evidence="5">
    <location>
        <begin position="222"/>
        <end position="233"/>
    </location>
</feature>
<feature type="strand" evidence="5">
    <location>
        <begin position="238"/>
        <end position="243"/>
    </location>
</feature>
<feature type="strand" evidence="5">
    <location>
        <begin position="248"/>
        <end position="250"/>
    </location>
</feature>
<feature type="helix" evidence="5">
    <location>
        <begin position="257"/>
        <end position="267"/>
    </location>
</feature>
<feature type="strand" evidence="5">
    <location>
        <begin position="268"/>
        <end position="270"/>
    </location>
</feature>
<feature type="strand" evidence="5">
    <location>
        <begin position="277"/>
        <end position="279"/>
    </location>
</feature>
<feature type="helix" evidence="5">
    <location>
        <begin position="281"/>
        <end position="284"/>
    </location>
</feature>
<feature type="strand" evidence="5">
    <location>
        <begin position="290"/>
        <end position="294"/>
    </location>
</feature>
<feature type="strand" evidence="5">
    <location>
        <begin position="296"/>
        <end position="299"/>
    </location>
</feature>
<feature type="turn" evidence="5">
    <location>
        <begin position="303"/>
        <end position="305"/>
    </location>
</feature>
<feature type="helix" evidence="5">
    <location>
        <begin position="306"/>
        <end position="308"/>
    </location>
</feature>
<feature type="strand" evidence="5">
    <location>
        <begin position="312"/>
        <end position="315"/>
    </location>
</feature>
<feature type="strand" evidence="5">
    <location>
        <begin position="318"/>
        <end position="320"/>
    </location>
</feature>
<feature type="helix" evidence="5">
    <location>
        <begin position="324"/>
        <end position="332"/>
    </location>
</feature>
<feature type="strand" evidence="5">
    <location>
        <begin position="336"/>
        <end position="338"/>
    </location>
</feature>
<feature type="helix" evidence="5">
    <location>
        <begin position="340"/>
        <end position="343"/>
    </location>
</feature>
<feature type="helix" evidence="5">
    <location>
        <begin position="346"/>
        <end position="359"/>
    </location>
</feature>
<feature type="helix" evidence="5">
    <location>
        <begin position="366"/>
        <end position="391"/>
    </location>
</feature>
<feature type="helix" evidence="5">
    <location>
        <begin position="395"/>
        <end position="413"/>
    </location>
</feature>
<name>DHE3_THEPR</name>
<dbReference type="EC" id="1.4.1.3"/>
<dbReference type="EMBL" id="D87814">
    <property type="protein sequence ID" value="BAA28943.1"/>
    <property type="molecule type" value="Genomic_DNA"/>
</dbReference>
<dbReference type="PIR" id="T44308">
    <property type="entry name" value="T44308"/>
</dbReference>
<dbReference type="RefSeq" id="WP_088857658.1">
    <property type="nucleotide sequence ID" value="NZ_CP014862.1"/>
</dbReference>
<dbReference type="PDB" id="1EUZ">
    <property type="method" value="X-ray"/>
    <property type="resolution" value="2.25 A"/>
    <property type="chains" value="A/B/C/D/E/F=1-419"/>
</dbReference>
<dbReference type="PDB" id="6JN9">
    <property type="method" value="EM"/>
    <property type="resolution" value="3.80 A"/>
    <property type="chains" value="A=1-419"/>
</dbReference>
<dbReference type="PDB" id="6JNA">
    <property type="method" value="EM"/>
    <property type="resolution" value="3.80 A"/>
    <property type="chains" value="A=1-419"/>
</dbReference>
<dbReference type="PDB" id="6JNC">
    <property type="method" value="EM"/>
    <property type="resolution" value="3.70 A"/>
    <property type="chains" value="A=1-419"/>
</dbReference>
<dbReference type="PDB" id="6JND">
    <property type="method" value="EM"/>
    <property type="resolution" value="3.90 A"/>
    <property type="chains" value="A=1-419"/>
</dbReference>
<dbReference type="PDB" id="8HHO">
    <property type="method" value="EM"/>
    <property type="resolution" value="3.20 A"/>
    <property type="chains" value="A=1-419"/>
</dbReference>
<dbReference type="PDB" id="8HIQ">
    <property type="method" value="EM"/>
    <property type="resolution" value="3.20 A"/>
    <property type="chains" value="A=1-419"/>
</dbReference>
<dbReference type="PDB" id="8HIZ">
    <property type="method" value="EM"/>
    <property type="resolution" value="3.08 A"/>
    <property type="chains" value="A=1-419"/>
</dbReference>
<dbReference type="PDB" id="8HJ3">
    <property type="method" value="EM"/>
    <property type="resolution" value="3.29 A"/>
    <property type="chains" value="A=1-419"/>
</dbReference>
<dbReference type="PDB" id="8HJ9">
    <property type="method" value="EM"/>
    <property type="resolution" value="3.12 A"/>
    <property type="chains" value="A=1-419"/>
</dbReference>
<dbReference type="PDB" id="8XCO">
    <property type="method" value="EM"/>
    <property type="resolution" value="2.64 A"/>
    <property type="chains" value="A=1-419"/>
</dbReference>
<dbReference type="PDB" id="8XCP">
    <property type="method" value="EM"/>
    <property type="resolution" value="2.64 A"/>
    <property type="chains" value="A=1-419"/>
</dbReference>
<dbReference type="PDB" id="8XCQ">
    <property type="method" value="EM"/>
    <property type="resolution" value="2.60 A"/>
    <property type="chains" value="A=1-419"/>
</dbReference>
<dbReference type="PDB" id="8XCR">
    <property type="method" value="EM"/>
    <property type="resolution" value="2.60 A"/>
    <property type="chains" value="A=1-419"/>
</dbReference>
<dbReference type="PDB" id="8XCS">
    <property type="method" value="EM"/>
    <property type="resolution" value="2.63 A"/>
    <property type="chains" value="A=1-419"/>
</dbReference>
<dbReference type="PDB" id="8XCT">
    <property type="method" value="EM"/>
    <property type="resolution" value="2.87 A"/>
    <property type="chains" value="A=1-419"/>
</dbReference>
<dbReference type="PDB" id="8XCU">
    <property type="method" value="EM"/>
    <property type="resolution" value="2.83 A"/>
    <property type="chains" value="A=1-419"/>
</dbReference>
<dbReference type="PDB" id="8XCV">
    <property type="method" value="EM"/>
    <property type="resolution" value="2.83 A"/>
    <property type="chains" value="A=1-419"/>
</dbReference>
<dbReference type="PDB" id="8XCW">
    <property type="method" value="EM"/>
    <property type="resolution" value="2.87 A"/>
    <property type="chains" value="A=1-419"/>
</dbReference>
<dbReference type="PDB" id="8XCX">
    <property type="method" value="EM"/>
    <property type="resolution" value="2.83 A"/>
    <property type="chains" value="A=1-419"/>
</dbReference>
<dbReference type="PDB" id="8XCY">
    <property type="method" value="EM"/>
    <property type="resolution" value="2.91 A"/>
    <property type="chains" value="A=1-419"/>
</dbReference>
<dbReference type="PDB" id="8XCZ">
    <property type="method" value="EM"/>
    <property type="resolution" value="2.83 A"/>
    <property type="chains" value="A=1-419"/>
</dbReference>
<dbReference type="PDB" id="8XD0">
    <property type="method" value="EM"/>
    <property type="resolution" value="2.83 A"/>
    <property type="chains" value="A=1-419"/>
</dbReference>
<dbReference type="PDB" id="8XD1">
    <property type="method" value="EM"/>
    <property type="resolution" value="2.96 A"/>
    <property type="chains" value="A=1-419"/>
</dbReference>
<dbReference type="PDB" id="8XD2">
    <property type="method" value="EM"/>
    <property type="resolution" value="2.64 A"/>
    <property type="chains" value="A=1-419"/>
</dbReference>
<dbReference type="PDB" id="8XD3">
    <property type="method" value="EM"/>
    <property type="resolution" value="2.87 A"/>
    <property type="chains" value="A=1-419"/>
</dbReference>
<dbReference type="PDB" id="8XD4">
    <property type="method" value="EM"/>
    <property type="resolution" value="2.87 A"/>
    <property type="chains" value="A=1-419"/>
</dbReference>
<dbReference type="PDB" id="8XD5">
    <property type="method" value="EM"/>
    <property type="resolution" value="2.75 A"/>
    <property type="chains" value="A=1-419"/>
</dbReference>
<dbReference type="PDB" id="8XD6">
    <property type="method" value="EM"/>
    <property type="resolution" value="2.79 A"/>
    <property type="chains" value="A=1-419"/>
</dbReference>
<dbReference type="PDB" id="8ZMU">
    <property type="method" value="X-ray"/>
    <property type="resolution" value="2.03 A"/>
    <property type="chains" value="A/B/C/D/E/F=1-419"/>
</dbReference>
<dbReference type="PDB" id="8ZNB">
    <property type="method" value="EM"/>
    <property type="resolution" value="2.53 A"/>
    <property type="chains" value="A=4-419"/>
</dbReference>
<dbReference type="PDB" id="8ZNC">
    <property type="method" value="EM"/>
    <property type="resolution" value="2.41 A"/>
    <property type="chains" value="A=4-419"/>
</dbReference>
<dbReference type="PDB" id="8ZND">
    <property type="method" value="EM"/>
    <property type="resolution" value="2.53 A"/>
    <property type="chains" value="A=4-419"/>
</dbReference>
<dbReference type="PDB" id="8ZNE">
    <property type="method" value="EM"/>
    <property type="resolution" value="2.64 A"/>
    <property type="chains" value="A=4-419"/>
</dbReference>
<dbReference type="PDB" id="8ZNG">
    <property type="method" value="EM"/>
    <property type="resolution" value="2.50 A"/>
    <property type="chains" value="A=4-419"/>
</dbReference>
<dbReference type="PDBsum" id="1EUZ"/>
<dbReference type="PDBsum" id="6JN9"/>
<dbReference type="PDBsum" id="6JNA"/>
<dbReference type="PDBsum" id="6JNC"/>
<dbReference type="PDBsum" id="6JND"/>
<dbReference type="PDBsum" id="8HHO"/>
<dbReference type="PDBsum" id="8HIQ"/>
<dbReference type="PDBsum" id="8HIZ"/>
<dbReference type="PDBsum" id="8HJ3"/>
<dbReference type="PDBsum" id="8HJ9"/>
<dbReference type="PDBsum" id="8XCO"/>
<dbReference type="PDBsum" id="8XCP"/>
<dbReference type="PDBsum" id="8XCQ"/>
<dbReference type="PDBsum" id="8XCR"/>
<dbReference type="PDBsum" id="8XCS"/>
<dbReference type="PDBsum" id="8XCT"/>
<dbReference type="PDBsum" id="8XCU"/>
<dbReference type="PDBsum" id="8XCV"/>
<dbReference type="PDBsum" id="8XCW"/>
<dbReference type="PDBsum" id="8XCX"/>
<dbReference type="PDBsum" id="8XCY"/>
<dbReference type="PDBsum" id="8XCZ"/>
<dbReference type="PDBsum" id="8XD0"/>
<dbReference type="PDBsum" id="8XD1"/>
<dbReference type="PDBsum" id="8XD2"/>
<dbReference type="PDBsum" id="8XD3"/>
<dbReference type="PDBsum" id="8XD4"/>
<dbReference type="PDBsum" id="8XD5"/>
<dbReference type="PDBsum" id="8XD6"/>
<dbReference type="PDBsum" id="8ZMU"/>
<dbReference type="PDBsum" id="8ZNB"/>
<dbReference type="PDBsum" id="8ZNC"/>
<dbReference type="PDBsum" id="8ZND"/>
<dbReference type="PDBsum" id="8ZNE"/>
<dbReference type="PDBsum" id="8ZNG"/>
<dbReference type="EMDB" id="EMD-34805"/>
<dbReference type="EMDB" id="EMD-34826"/>
<dbReference type="EMDB" id="EMD-34830"/>
<dbReference type="EMDB" id="EMD-34831"/>
<dbReference type="EMDB" id="EMD-34835"/>
<dbReference type="EMDB" id="EMD-38249"/>
<dbReference type="EMDB" id="EMD-38250"/>
<dbReference type="EMDB" id="EMD-38251"/>
<dbReference type="EMDB" id="EMD-38252"/>
<dbReference type="EMDB" id="EMD-38253"/>
<dbReference type="EMDB" id="EMD-38254"/>
<dbReference type="EMDB" id="EMD-38255"/>
<dbReference type="EMDB" id="EMD-38256"/>
<dbReference type="EMDB" id="EMD-38257"/>
<dbReference type="EMDB" id="EMD-38258"/>
<dbReference type="EMDB" id="EMD-38259"/>
<dbReference type="EMDB" id="EMD-38260"/>
<dbReference type="EMDB" id="EMD-38261"/>
<dbReference type="EMDB" id="EMD-38262"/>
<dbReference type="EMDB" id="EMD-38263"/>
<dbReference type="EMDB" id="EMD-38264"/>
<dbReference type="EMDB" id="EMD-38265"/>
<dbReference type="EMDB" id="EMD-38266"/>
<dbReference type="EMDB" id="EMD-38267"/>
<dbReference type="EMDB" id="EMD-60266"/>
<dbReference type="EMDB" id="EMD-60267"/>
<dbReference type="EMDB" id="EMD-60268"/>
<dbReference type="EMDB" id="EMD-60269"/>
<dbReference type="EMDB" id="EMD-60270"/>
<dbReference type="SMR" id="O74024"/>
<dbReference type="GeneID" id="33319462"/>
<dbReference type="OrthoDB" id="6425at2157"/>
<dbReference type="BRENDA" id="1.4.1.3">
    <property type="organism ID" value="6303"/>
</dbReference>
<dbReference type="EvolutionaryTrace" id="O74024"/>
<dbReference type="GO" id="GO:0004352">
    <property type="term" value="F:glutamate dehydrogenase (NAD+) activity"/>
    <property type="evidence" value="ECO:0007669"/>
    <property type="project" value="RHEA"/>
</dbReference>
<dbReference type="GO" id="GO:0004354">
    <property type="term" value="F:glutamate dehydrogenase (NADP+) activity"/>
    <property type="evidence" value="ECO:0007669"/>
    <property type="project" value="RHEA"/>
</dbReference>
<dbReference type="GO" id="GO:0006538">
    <property type="term" value="P:glutamate catabolic process"/>
    <property type="evidence" value="ECO:0007669"/>
    <property type="project" value="TreeGrafter"/>
</dbReference>
<dbReference type="CDD" id="cd01076">
    <property type="entry name" value="NAD_bind_1_Glu_DH"/>
    <property type="match status" value="1"/>
</dbReference>
<dbReference type="FunFam" id="3.40.50.10860:FF:000003">
    <property type="entry name" value="Glutamate dehydrogenase"/>
    <property type="match status" value="1"/>
</dbReference>
<dbReference type="Gene3D" id="3.40.50.10860">
    <property type="entry name" value="Leucine Dehydrogenase, chain A, domain 1"/>
    <property type="match status" value="1"/>
</dbReference>
<dbReference type="Gene3D" id="3.40.50.720">
    <property type="entry name" value="NAD(P)-binding Rossmann-like Domain"/>
    <property type="match status" value="1"/>
</dbReference>
<dbReference type="InterPro" id="IPR046346">
    <property type="entry name" value="Aminoacid_DH-like_N_sf"/>
</dbReference>
<dbReference type="InterPro" id="IPR053388">
    <property type="entry name" value="GLPV_dehydrogenases"/>
</dbReference>
<dbReference type="InterPro" id="IPR006095">
    <property type="entry name" value="Glu/Leu/Phe/Val/Trp_DH"/>
</dbReference>
<dbReference type="InterPro" id="IPR006096">
    <property type="entry name" value="Glu/Leu/Phe/Val/Trp_DH_C"/>
</dbReference>
<dbReference type="InterPro" id="IPR006097">
    <property type="entry name" value="Glu/Leu/Phe/Val/Trp_DH_dimer"/>
</dbReference>
<dbReference type="InterPro" id="IPR033524">
    <property type="entry name" value="Glu/Leu/Phe/Val_DH_AS"/>
</dbReference>
<dbReference type="InterPro" id="IPR014362">
    <property type="entry name" value="Glu_DH"/>
</dbReference>
<dbReference type="InterPro" id="IPR036291">
    <property type="entry name" value="NAD(P)-bd_dom_sf"/>
</dbReference>
<dbReference type="InterPro" id="IPR033922">
    <property type="entry name" value="NAD_bind_Glu_DH"/>
</dbReference>
<dbReference type="NCBIfam" id="NF040817">
    <property type="entry name" value="GdhA_Arch"/>
    <property type="match status" value="1"/>
</dbReference>
<dbReference type="PANTHER" id="PTHR11606">
    <property type="entry name" value="GLUTAMATE DEHYDROGENASE"/>
    <property type="match status" value="1"/>
</dbReference>
<dbReference type="PANTHER" id="PTHR11606:SF13">
    <property type="entry name" value="GLUTAMATE DEHYDROGENASE 1, MITOCHONDRIAL"/>
    <property type="match status" value="1"/>
</dbReference>
<dbReference type="Pfam" id="PF00208">
    <property type="entry name" value="ELFV_dehydrog"/>
    <property type="match status" value="1"/>
</dbReference>
<dbReference type="Pfam" id="PF02812">
    <property type="entry name" value="ELFV_dehydrog_N"/>
    <property type="match status" value="1"/>
</dbReference>
<dbReference type="PIRSF" id="PIRSF000185">
    <property type="entry name" value="Glu_DH"/>
    <property type="match status" value="1"/>
</dbReference>
<dbReference type="PRINTS" id="PR00082">
    <property type="entry name" value="GLFDHDRGNASE"/>
</dbReference>
<dbReference type="SMART" id="SM00839">
    <property type="entry name" value="ELFV_dehydrog"/>
    <property type="match status" value="1"/>
</dbReference>
<dbReference type="SUPFAM" id="SSF53223">
    <property type="entry name" value="Aminoacid dehydrogenase-like, N-terminal domain"/>
    <property type="match status" value="1"/>
</dbReference>
<dbReference type="SUPFAM" id="SSF51735">
    <property type="entry name" value="NAD(P)-binding Rossmann-fold domains"/>
    <property type="match status" value="1"/>
</dbReference>
<dbReference type="PROSITE" id="PS00074">
    <property type="entry name" value="GLFV_DEHYDROGENASE"/>
    <property type="match status" value="1"/>
</dbReference>
<gene>
    <name type="primary">gdhA</name>
    <name type="synonym">gdh</name>
</gene>
<accession>O74024</accession>
<keyword id="KW-0002">3D-structure</keyword>
<keyword id="KW-0520">NAD</keyword>
<keyword id="KW-0521">NADP</keyword>
<keyword id="KW-0560">Oxidoreductase</keyword>
<evidence type="ECO:0000250" key="1"/>
<evidence type="ECO:0000255" key="2"/>
<evidence type="ECO:0000255" key="3">
    <source>
        <dbReference type="PROSITE-ProRule" id="PRU10011"/>
    </source>
</evidence>
<evidence type="ECO:0000305" key="4"/>
<evidence type="ECO:0007829" key="5">
    <source>
        <dbReference type="PDB" id="1EUZ"/>
    </source>
</evidence>
<evidence type="ECO:0007829" key="6">
    <source>
        <dbReference type="PDB" id="8XCQ"/>
    </source>
</evidence>
<evidence type="ECO:0007829" key="7">
    <source>
        <dbReference type="PDB" id="8XCR"/>
    </source>
</evidence>
<reference key="1">
    <citation type="journal article" date="1997" name="J. Ferment. Bioeng.">
        <title>Molecular cloning, nucleotide sequence and expression in Escherichia coli of hyperthermophilic glutamate dehydrogenase gene from Thermococcus profundus.</title>
        <authorList>
            <person name="Higuchi S."/>
            <person name="Kobayashi T."/>
            <person name="Kimura K."/>
            <person name="Horikoshi K."/>
            <person name="Kudo T."/>
        </authorList>
    </citation>
    <scope>NUCLEOTIDE SEQUENCE [GENOMIC DNA]</scope>
</reference>
<comment type="catalytic activity">
    <reaction evidence="3">
        <text>L-glutamate + NAD(+) + H2O = 2-oxoglutarate + NH4(+) + NADH + H(+)</text>
        <dbReference type="Rhea" id="RHEA:15133"/>
        <dbReference type="ChEBI" id="CHEBI:15377"/>
        <dbReference type="ChEBI" id="CHEBI:15378"/>
        <dbReference type="ChEBI" id="CHEBI:16810"/>
        <dbReference type="ChEBI" id="CHEBI:28938"/>
        <dbReference type="ChEBI" id="CHEBI:29985"/>
        <dbReference type="ChEBI" id="CHEBI:57540"/>
        <dbReference type="ChEBI" id="CHEBI:57945"/>
        <dbReference type="EC" id="1.4.1.3"/>
    </reaction>
</comment>
<comment type="catalytic activity">
    <reaction evidence="3">
        <text>L-glutamate + NADP(+) + H2O = 2-oxoglutarate + NH4(+) + NADPH + H(+)</text>
        <dbReference type="Rhea" id="RHEA:11612"/>
        <dbReference type="ChEBI" id="CHEBI:15377"/>
        <dbReference type="ChEBI" id="CHEBI:15378"/>
        <dbReference type="ChEBI" id="CHEBI:16810"/>
        <dbReference type="ChEBI" id="CHEBI:28938"/>
        <dbReference type="ChEBI" id="CHEBI:29985"/>
        <dbReference type="ChEBI" id="CHEBI:57783"/>
        <dbReference type="ChEBI" id="CHEBI:58349"/>
        <dbReference type="EC" id="1.4.1.3"/>
    </reaction>
</comment>
<comment type="subunit">
    <text evidence="1">Homohexamer.</text>
</comment>
<comment type="similarity">
    <text evidence="4">Belongs to the Glu/Leu/Phe/Val dehydrogenases family.</text>
</comment>
<protein>
    <recommendedName>
        <fullName>Glutamate dehydrogenase</fullName>
        <shortName>GDH</shortName>
        <ecNumber>1.4.1.3</ecNumber>
    </recommendedName>
</protein>
<sequence length="419" mass="46700">MVEIDPFEMAVKQLERAAQYMDISEEALEWLKKPMRIVEVSVPIEMDDGSVKVFTGFRVQHNWARGPTKGGIRWHPAETLSTVKALATWMTWKVAVVDLPYGGGKGGIIVNPKELSEREQERLARAYIRAVYDVIGPWTDIPAPDVYTNPKIMGWMMDEYETIMRRKGPAFGVITGKPLSIGGSLGRGTATAQGAIFTIREAAKALGIDLKGKKIAVQGYGNAGYYTAKLAKEQLGMTVVAVSDSRGGIYNPDGLDPDEVLKWKREHGSVKDFPGATNITNEELLELEVDVLAPAAIEEVITEKNADNIKAKIVAEVANGPVTPEADDILREKGILQIPDFLCNAGGVTVSYFEWVQNINGYYWTEEEVREKLDKKMTKAFWEVYNTHKDKNIHMRDAAYVVAVSRVYQAMKDRGWVKK</sequence>
<proteinExistence type="evidence at protein level"/>